<dbReference type="EMBL" id="FM204883">
    <property type="protein sequence ID" value="CAW95556.1"/>
    <property type="molecule type" value="Genomic_DNA"/>
</dbReference>
<dbReference type="RefSeq" id="WP_015898679.1">
    <property type="nucleotide sequence ID" value="NC_012471.1"/>
</dbReference>
<dbReference type="SMR" id="C0MB23"/>
<dbReference type="KEGG" id="seu:SEQ_2176"/>
<dbReference type="HOGENOM" id="CLU_129084_2_3_9"/>
<dbReference type="OrthoDB" id="9812874at2"/>
<dbReference type="Proteomes" id="UP000001365">
    <property type="component" value="Chromosome"/>
</dbReference>
<dbReference type="GO" id="GO:0015934">
    <property type="term" value="C:large ribosomal subunit"/>
    <property type="evidence" value="ECO:0007669"/>
    <property type="project" value="InterPro"/>
</dbReference>
<dbReference type="GO" id="GO:0003735">
    <property type="term" value="F:structural constituent of ribosome"/>
    <property type="evidence" value="ECO:0007669"/>
    <property type="project" value="InterPro"/>
</dbReference>
<dbReference type="GO" id="GO:0006412">
    <property type="term" value="P:translation"/>
    <property type="evidence" value="ECO:0007669"/>
    <property type="project" value="UniProtKB-UniRule"/>
</dbReference>
<dbReference type="HAMAP" id="MF_00340">
    <property type="entry name" value="Ribosomal_bL32"/>
    <property type="match status" value="1"/>
</dbReference>
<dbReference type="InterPro" id="IPR002677">
    <property type="entry name" value="Ribosomal_bL32"/>
</dbReference>
<dbReference type="InterPro" id="IPR044957">
    <property type="entry name" value="Ribosomal_bL32_bact"/>
</dbReference>
<dbReference type="InterPro" id="IPR011332">
    <property type="entry name" value="Ribosomal_zn-bd"/>
</dbReference>
<dbReference type="NCBIfam" id="TIGR01031">
    <property type="entry name" value="rpmF_bact"/>
    <property type="match status" value="1"/>
</dbReference>
<dbReference type="PANTHER" id="PTHR35534">
    <property type="entry name" value="50S RIBOSOMAL PROTEIN L32"/>
    <property type="match status" value="1"/>
</dbReference>
<dbReference type="PANTHER" id="PTHR35534:SF1">
    <property type="entry name" value="LARGE RIBOSOMAL SUBUNIT PROTEIN BL32"/>
    <property type="match status" value="1"/>
</dbReference>
<dbReference type="Pfam" id="PF01783">
    <property type="entry name" value="Ribosomal_L32p"/>
    <property type="match status" value="1"/>
</dbReference>
<dbReference type="SUPFAM" id="SSF57829">
    <property type="entry name" value="Zn-binding ribosomal proteins"/>
    <property type="match status" value="1"/>
</dbReference>
<feature type="chain" id="PRO_1000195994" description="Large ribosomal subunit protein bL32">
    <location>
        <begin position="1"/>
        <end position="60"/>
    </location>
</feature>
<feature type="region of interest" description="Disordered" evidence="2">
    <location>
        <begin position="1"/>
        <end position="23"/>
    </location>
</feature>
<feature type="compositionally biased region" description="Basic residues" evidence="2">
    <location>
        <begin position="7"/>
        <end position="20"/>
    </location>
</feature>
<proteinExistence type="inferred from homology"/>
<organism>
    <name type="scientific">Streptococcus equi subsp. equi (strain 4047)</name>
    <dbReference type="NCBI Taxonomy" id="553482"/>
    <lineage>
        <taxon>Bacteria</taxon>
        <taxon>Bacillati</taxon>
        <taxon>Bacillota</taxon>
        <taxon>Bacilli</taxon>
        <taxon>Lactobacillales</taxon>
        <taxon>Streptococcaceae</taxon>
        <taxon>Streptococcus</taxon>
    </lineage>
</organism>
<protein>
    <recommendedName>
        <fullName evidence="1">Large ribosomal subunit protein bL32</fullName>
    </recommendedName>
    <alternativeName>
        <fullName evidence="3">50S ribosomal protein L32</fullName>
    </alternativeName>
</protein>
<gene>
    <name evidence="1" type="primary">rpmF</name>
    <name type="ordered locus">SEQ_2176</name>
</gene>
<accession>C0MB23</accession>
<keyword id="KW-0687">Ribonucleoprotein</keyword>
<keyword id="KW-0689">Ribosomal protein</keyword>
<name>RL32_STRE4</name>
<comment type="similarity">
    <text evidence="1">Belongs to the bacterial ribosomal protein bL32 family.</text>
</comment>
<sequence>MAVPARHTSKAKKNKRRTHYKLTAPSVKFDETTGDYSRSHRVSLKGYYKGHKIAKANAAE</sequence>
<evidence type="ECO:0000255" key="1">
    <source>
        <dbReference type="HAMAP-Rule" id="MF_00340"/>
    </source>
</evidence>
<evidence type="ECO:0000256" key="2">
    <source>
        <dbReference type="SAM" id="MobiDB-lite"/>
    </source>
</evidence>
<evidence type="ECO:0000305" key="3"/>
<reference key="1">
    <citation type="journal article" date="2009" name="PLoS Pathog.">
        <title>Genomic evidence for the evolution of Streptococcus equi: host restriction, increased virulence, and genetic exchange with human pathogens.</title>
        <authorList>
            <person name="Holden M.T.G."/>
            <person name="Heather Z."/>
            <person name="Paillot R."/>
            <person name="Steward K.F."/>
            <person name="Webb K."/>
            <person name="Ainslie F."/>
            <person name="Jourdan T."/>
            <person name="Bason N.C."/>
            <person name="Holroyd N.E."/>
            <person name="Mungall K."/>
            <person name="Quail M.A."/>
            <person name="Sanders M."/>
            <person name="Simmonds M."/>
            <person name="Willey D."/>
            <person name="Brooks K."/>
            <person name="Aanensen D.M."/>
            <person name="Spratt B.G."/>
            <person name="Jolley K.A."/>
            <person name="Maiden M.C.J."/>
            <person name="Kehoe M."/>
            <person name="Chanter N."/>
            <person name="Bentley S.D."/>
            <person name="Robinson C."/>
            <person name="Maskell D.J."/>
            <person name="Parkhill J."/>
            <person name="Waller A.S."/>
        </authorList>
    </citation>
    <scope>NUCLEOTIDE SEQUENCE [LARGE SCALE GENOMIC DNA]</scope>
    <source>
        <strain>4047</strain>
    </source>
</reference>